<name>MODC_MYCTO</name>
<gene>
    <name evidence="1" type="primary">modC</name>
    <name type="ordered locus">MT1907</name>
</gene>
<dbReference type="EC" id="7.3.2.5" evidence="1"/>
<dbReference type="EMBL" id="AE000516">
    <property type="protein sequence ID" value="AAK46178.1"/>
    <property type="molecule type" value="Genomic_DNA"/>
</dbReference>
<dbReference type="PIR" id="C70666">
    <property type="entry name" value="C70666"/>
</dbReference>
<dbReference type="RefSeq" id="WP_003899051.1">
    <property type="nucleotide sequence ID" value="NZ_KK341227.1"/>
</dbReference>
<dbReference type="SMR" id="P9WQL2"/>
<dbReference type="KEGG" id="mtc:MT1907"/>
<dbReference type="PATRIC" id="fig|83331.31.peg.2051"/>
<dbReference type="HOGENOM" id="CLU_000604_1_1_11"/>
<dbReference type="Proteomes" id="UP000001020">
    <property type="component" value="Chromosome"/>
</dbReference>
<dbReference type="GO" id="GO:0005886">
    <property type="term" value="C:plasma membrane"/>
    <property type="evidence" value="ECO:0007669"/>
    <property type="project" value="UniProtKB-SubCell"/>
</dbReference>
<dbReference type="GO" id="GO:0015412">
    <property type="term" value="F:ABC-type molybdate transporter activity"/>
    <property type="evidence" value="ECO:0007669"/>
    <property type="project" value="UniProtKB-EC"/>
</dbReference>
<dbReference type="GO" id="GO:0005524">
    <property type="term" value="F:ATP binding"/>
    <property type="evidence" value="ECO:0007669"/>
    <property type="project" value="UniProtKB-KW"/>
</dbReference>
<dbReference type="GO" id="GO:0016887">
    <property type="term" value="F:ATP hydrolysis activity"/>
    <property type="evidence" value="ECO:0007669"/>
    <property type="project" value="InterPro"/>
</dbReference>
<dbReference type="FunFam" id="3.40.50.300:FF:002924">
    <property type="entry name" value="ABC transporter ATP-binding protein"/>
    <property type="match status" value="1"/>
</dbReference>
<dbReference type="Gene3D" id="2.40.50.100">
    <property type="match status" value="1"/>
</dbReference>
<dbReference type="Gene3D" id="3.40.50.300">
    <property type="entry name" value="P-loop containing nucleotide triphosphate hydrolases"/>
    <property type="match status" value="1"/>
</dbReference>
<dbReference type="InterPro" id="IPR003593">
    <property type="entry name" value="AAA+_ATPase"/>
</dbReference>
<dbReference type="InterPro" id="IPR003439">
    <property type="entry name" value="ABC_transporter-like_ATP-bd"/>
</dbReference>
<dbReference type="InterPro" id="IPR017871">
    <property type="entry name" value="ABC_transporter-like_CS"/>
</dbReference>
<dbReference type="InterPro" id="IPR008995">
    <property type="entry name" value="Mo/tungstate-bd_C_term_dom"/>
</dbReference>
<dbReference type="InterPro" id="IPR050334">
    <property type="entry name" value="Molybdenum_import_ModC"/>
</dbReference>
<dbReference type="InterPro" id="IPR004606">
    <property type="entry name" value="Mop_domain"/>
</dbReference>
<dbReference type="InterPro" id="IPR027417">
    <property type="entry name" value="P-loop_NTPase"/>
</dbReference>
<dbReference type="InterPro" id="IPR005116">
    <property type="entry name" value="Transp-assoc_OB_typ1"/>
</dbReference>
<dbReference type="PANTHER" id="PTHR43514">
    <property type="entry name" value="ABC TRANSPORTER I FAMILY MEMBER 10"/>
    <property type="match status" value="1"/>
</dbReference>
<dbReference type="PANTHER" id="PTHR43514:SF4">
    <property type="entry name" value="ABC TRANSPORTER I FAMILY MEMBER 10"/>
    <property type="match status" value="1"/>
</dbReference>
<dbReference type="Pfam" id="PF00005">
    <property type="entry name" value="ABC_tran"/>
    <property type="match status" value="1"/>
</dbReference>
<dbReference type="Pfam" id="PF03459">
    <property type="entry name" value="TOBE"/>
    <property type="match status" value="1"/>
</dbReference>
<dbReference type="SMART" id="SM00382">
    <property type="entry name" value="AAA"/>
    <property type="match status" value="1"/>
</dbReference>
<dbReference type="SUPFAM" id="SSF50331">
    <property type="entry name" value="MOP-like"/>
    <property type="match status" value="1"/>
</dbReference>
<dbReference type="SUPFAM" id="SSF52540">
    <property type="entry name" value="P-loop containing nucleoside triphosphate hydrolases"/>
    <property type="match status" value="1"/>
</dbReference>
<dbReference type="PROSITE" id="PS00211">
    <property type="entry name" value="ABC_TRANSPORTER_1"/>
    <property type="match status" value="1"/>
</dbReference>
<dbReference type="PROSITE" id="PS50893">
    <property type="entry name" value="ABC_TRANSPORTER_2"/>
    <property type="match status" value="1"/>
</dbReference>
<dbReference type="PROSITE" id="PS51241">
    <property type="entry name" value="MODC"/>
    <property type="match status" value="1"/>
</dbReference>
<dbReference type="PROSITE" id="PS51866">
    <property type="entry name" value="MOP"/>
    <property type="match status" value="1"/>
</dbReference>
<accession>P9WQL2</accession>
<accession>L0TAL9</accession>
<accession>O05126</accession>
<accession>P95155</accession>
<proteinExistence type="inferred from homology"/>
<protein>
    <recommendedName>
        <fullName evidence="1">Molybdenum import ATP-binding protein ModC</fullName>
        <ecNumber evidence="1">7.3.2.5</ecNumber>
    </recommendedName>
</protein>
<comment type="function">
    <text evidence="1">Part of the ABC transporter complex ModABC involved in molybdenum import. Responsible for energy coupling to the transport system.</text>
</comment>
<comment type="catalytic activity">
    <reaction evidence="1">
        <text>molybdate(out) + ATP + H2O = molybdate(in) + ADP + phosphate + H(+)</text>
        <dbReference type="Rhea" id="RHEA:22020"/>
        <dbReference type="ChEBI" id="CHEBI:15377"/>
        <dbReference type="ChEBI" id="CHEBI:15378"/>
        <dbReference type="ChEBI" id="CHEBI:30616"/>
        <dbReference type="ChEBI" id="CHEBI:36264"/>
        <dbReference type="ChEBI" id="CHEBI:43474"/>
        <dbReference type="ChEBI" id="CHEBI:456216"/>
        <dbReference type="EC" id="7.3.2.5"/>
    </reaction>
</comment>
<comment type="subunit">
    <text evidence="1">The complex is composed of two ATP-binding proteins (ModC), two transmembrane proteins (ModB) and a solute-binding protein (ModA).</text>
</comment>
<comment type="subcellular location">
    <subcellularLocation>
        <location evidence="1">Cell membrane</location>
        <topology evidence="1">Peripheral membrane protein</topology>
    </subcellularLocation>
</comment>
<comment type="similarity">
    <text evidence="1">Belongs to the ABC transporter superfamily. Molybdate importer (TC 3.A.1.8) family.</text>
</comment>
<organism>
    <name type="scientific">Mycobacterium tuberculosis (strain CDC 1551 / Oshkosh)</name>
    <dbReference type="NCBI Taxonomy" id="83331"/>
    <lineage>
        <taxon>Bacteria</taxon>
        <taxon>Bacillati</taxon>
        <taxon>Actinomycetota</taxon>
        <taxon>Actinomycetes</taxon>
        <taxon>Mycobacteriales</taxon>
        <taxon>Mycobacteriaceae</taxon>
        <taxon>Mycobacterium</taxon>
        <taxon>Mycobacterium tuberculosis complex</taxon>
    </lineage>
</organism>
<keyword id="KW-0067">ATP-binding</keyword>
<keyword id="KW-1003">Cell membrane</keyword>
<keyword id="KW-0472">Membrane</keyword>
<keyword id="KW-0500">Molybdenum</keyword>
<keyword id="KW-0547">Nucleotide-binding</keyword>
<keyword id="KW-1185">Reference proteome</keyword>
<keyword id="KW-1278">Translocase</keyword>
<keyword id="KW-0813">Transport</keyword>
<evidence type="ECO:0000255" key="1">
    <source>
        <dbReference type="HAMAP-Rule" id="MF_01705"/>
    </source>
</evidence>
<evidence type="ECO:0000255" key="2">
    <source>
        <dbReference type="PROSITE-ProRule" id="PRU01213"/>
    </source>
</evidence>
<sequence length="369" mass="38610">MSKLQLRAVVADRRLDVEFSVSAGEVLAVLGPNGAGKSTALHVIAGLLRPDAGLVRLGDRVLTDTEAGVNVATHDRRVGLLLQDPLLFPHLSVAKNVAFGPQCRRGMFGSGRARTRASALRWLREVNAEQFADRKPRQLSGGQAQRVAIARALAAEPDVLLLDEPLTGLDVAAAAGIRSVLRSVVARSGCAVVLTTHDLLDVFTLADRVLVLESGTIAEIGPVADVLTAPRSRFGARIAGVNLVNGTIGPDGSLRTQSGAHWYGTPVQDLPTGHEAIAVFPPTAVAVYPEPPHGSPRNIVGLTVAEVDTRGPTVLVRGHDQPGGAPGLAACITVDAATELRVAPGSRVWFSVKAQEVALHPAPHQHASS</sequence>
<feature type="chain" id="PRO_0000426756" description="Molybdenum import ATP-binding protein ModC">
    <location>
        <begin position="1"/>
        <end position="369"/>
    </location>
</feature>
<feature type="domain" description="ABC transporter" evidence="1">
    <location>
        <begin position="4"/>
        <end position="239"/>
    </location>
</feature>
<feature type="domain" description="Mop" evidence="2">
    <location>
        <begin position="293"/>
        <end position="361"/>
    </location>
</feature>
<feature type="binding site" evidence="1">
    <location>
        <begin position="31"/>
        <end position="38"/>
    </location>
    <ligand>
        <name>ATP</name>
        <dbReference type="ChEBI" id="CHEBI:30616"/>
    </ligand>
</feature>
<reference key="1">
    <citation type="journal article" date="2002" name="J. Bacteriol.">
        <title>Whole-genome comparison of Mycobacterium tuberculosis clinical and laboratory strains.</title>
        <authorList>
            <person name="Fleischmann R.D."/>
            <person name="Alland D."/>
            <person name="Eisen J.A."/>
            <person name="Carpenter L."/>
            <person name="White O."/>
            <person name="Peterson J.D."/>
            <person name="DeBoy R.T."/>
            <person name="Dodson R.J."/>
            <person name="Gwinn M.L."/>
            <person name="Haft D.H."/>
            <person name="Hickey E.K."/>
            <person name="Kolonay J.F."/>
            <person name="Nelson W.C."/>
            <person name="Umayam L.A."/>
            <person name="Ermolaeva M.D."/>
            <person name="Salzberg S.L."/>
            <person name="Delcher A."/>
            <person name="Utterback T.R."/>
            <person name="Weidman J.F."/>
            <person name="Khouri H.M."/>
            <person name="Gill J."/>
            <person name="Mikula A."/>
            <person name="Bishai W."/>
            <person name="Jacobs W.R. Jr."/>
            <person name="Venter J.C."/>
            <person name="Fraser C.M."/>
        </authorList>
    </citation>
    <scope>NUCLEOTIDE SEQUENCE [LARGE SCALE GENOMIC DNA]</scope>
    <source>
        <strain>CDC 1551 / Oshkosh</strain>
    </source>
</reference>